<name>ATGT_KORCO</name>
<organism>
    <name type="scientific">Korarchaeum cryptofilum (strain OPF8)</name>
    <dbReference type="NCBI Taxonomy" id="374847"/>
    <lineage>
        <taxon>Archaea</taxon>
        <taxon>Thermoproteota</taxon>
        <taxon>Candidatus Korarchaeia</taxon>
        <taxon>Candidatus Korarchaeales</taxon>
        <taxon>Candidatus Korarchaeaceae</taxon>
        <taxon>Candidatus Korarchaeum</taxon>
    </lineage>
</organism>
<accession>B1L6M8</accession>
<evidence type="ECO:0000255" key="1">
    <source>
        <dbReference type="HAMAP-Rule" id="MF_01634"/>
    </source>
</evidence>
<gene>
    <name evidence="1" type="primary">tgtA</name>
    <name type="ordered locus">Kcr_1361</name>
</gene>
<dbReference type="EC" id="2.4.2.48" evidence="1"/>
<dbReference type="EMBL" id="CP000968">
    <property type="protein sequence ID" value="ACB08107.1"/>
    <property type="molecule type" value="Genomic_DNA"/>
</dbReference>
<dbReference type="RefSeq" id="WP_012310004.1">
    <property type="nucleotide sequence ID" value="NC_010482.1"/>
</dbReference>
<dbReference type="SMR" id="B1L6M8"/>
<dbReference type="FunCoup" id="B1L6M8">
    <property type="interactions" value="128"/>
</dbReference>
<dbReference type="STRING" id="374847.Kcr_1361"/>
<dbReference type="EnsemblBacteria" id="ACB08107">
    <property type="protein sequence ID" value="ACB08107"/>
    <property type="gene ID" value="Kcr_1361"/>
</dbReference>
<dbReference type="GeneID" id="6094638"/>
<dbReference type="KEGG" id="kcr:Kcr_1361"/>
<dbReference type="eggNOG" id="arCOG00989">
    <property type="taxonomic scope" value="Archaea"/>
</dbReference>
<dbReference type="HOGENOM" id="CLU_030083_0_0_2"/>
<dbReference type="InParanoid" id="B1L6M8"/>
<dbReference type="OrthoDB" id="6871at2157"/>
<dbReference type="PhylomeDB" id="B1L6M8"/>
<dbReference type="UniPathway" id="UPA00393"/>
<dbReference type="Proteomes" id="UP000001686">
    <property type="component" value="Chromosome"/>
</dbReference>
<dbReference type="GO" id="GO:0005737">
    <property type="term" value="C:cytoplasm"/>
    <property type="evidence" value="ECO:0000318"/>
    <property type="project" value="GO_Central"/>
</dbReference>
<dbReference type="GO" id="GO:0016763">
    <property type="term" value="F:pentosyltransferase activity"/>
    <property type="evidence" value="ECO:0007669"/>
    <property type="project" value="UniProtKB-UniRule"/>
</dbReference>
<dbReference type="GO" id="GO:0003723">
    <property type="term" value="F:RNA binding"/>
    <property type="evidence" value="ECO:0007669"/>
    <property type="project" value="InterPro"/>
</dbReference>
<dbReference type="GO" id="GO:0008270">
    <property type="term" value="F:zinc ion binding"/>
    <property type="evidence" value="ECO:0007669"/>
    <property type="project" value="UniProtKB-UniRule"/>
</dbReference>
<dbReference type="GO" id="GO:0002099">
    <property type="term" value="P:tRNA wobble guanine modification"/>
    <property type="evidence" value="ECO:0000318"/>
    <property type="project" value="GO_Central"/>
</dbReference>
<dbReference type="CDD" id="cd21149">
    <property type="entry name" value="PUA_archaeosine_TGT"/>
    <property type="match status" value="1"/>
</dbReference>
<dbReference type="Gene3D" id="3.90.1020.10">
    <property type="entry name" value="ArcTGT, C1 domain"/>
    <property type="match status" value="1"/>
</dbReference>
<dbReference type="Gene3D" id="3.10.450.90">
    <property type="entry name" value="ArcTGT, C2 domain"/>
    <property type="match status" value="1"/>
</dbReference>
<dbReference type="Gene3D" id="2.30.130.10">
    <property type="entry name" value="PUA domain"/>
    <property type="match status" value="1"/>
</dbReference>
<dbReference type="Gene3D" id="3.20.20.105">
    <property type="entry name" value="Queuine tRNA-ribosyltransferase-like"/>
    <property type="match status" value="1"/>
</dbReference>
<dbReference type="HAMAP" id="MF_01634">
    <property type="entry name" value="TgtA_arch"/>
    <property type="match status" value="1"/>
</dbReference>
<dbReference type="InterPro" id="IPR050076">
    <property type="entry name" value="ArchSynthase1/Queuine_TRR"/>
</dbReference>
<dbReference type="InterPro" id="IPR038370">
    <property type="entry name" value="ArcTGT_C1_sf"/>
</dbReference>
<dbReference type="InterPro" id="IPR002478">
    <property type="entry name" value="PUA"/>
</dbReference>
<dbReference type="InterPro" id="IPR015947">
    <property type="entry name" value="PUA-like_sf"/>
</dbReference>
<dbReference type="InterPro" id="IPR036974">
    <property type="entry name" value="PUA_sf"/>
</dbReference>
<dbReference type="InterPro" id="IPR036511">
    <property type="entry name" value="TGT-like_sf"/>
</dbReference>
<dbReference type="InterPro" id="IPR029402">
    <property type="entry name" value="TGT_C2"/>
</dbReference>
<dbReference type="InterPro" id="IPR038250">
    <property type="entry name" value="TGT_C2_sf"/>
</dbReference>
<dbReference type="InterPro" id="IPR004804">
    <property type="entry name" value="TgtA"/>
</dbReference>
<dbReference type="InterPro" id="IPR002616">
    <property type="entry name" value="tRNA_ribo_trans-like"/>
</dbReference>
<dbReference type="NCBIfam" id="TIGR00432">
    <property type="entry name" value="arcsn_tRNA_tgt"/>
    <property type="match status" value="1"/>
</dbReference>
<dbReference type="NCBIfam" id="TIGR00449">
    <property type="entry name" value="tgt_general"/>
    <property type="match status" value="1"/>
</dbReference>
<dbReference type="PANTHER" id="PTHR46499">
    <property type="entry name" value="QUEUINE TRNA-RIBOSYLTRANSFERASE"/>
    <property type="match status" value="1"/>
</dbReference>
<dbReference type="PANTHER" id="PTHR46499:SF1">
    <property type="entry name" value="QUEUINE TRNA-RIBOSYLTRANSFERASE"/>
    <property type="match status" value="1"/>
</dbReference>
<dbReference type="Pfam" id="PF01472">
    <property type="entry name" value="PUA"/>
    <property type="match status" value="1"/>
</dbReference>
<dbReference type="Pfam" id="PF01702">
    <property type="entry name" value="TGT"/>
    <property type="match status" value="1"/>
</dbReference>
<dbReference type="Pfam" id="PF14810">
    <property type="entry name" value="TGT_C2"/>
    <property type="match status" value="1"/>
</dbReference>
<dbReference type="SUPFAM" id="SSF88802">
    <property type="entry name" value="Pre-PUA domain"/>
    <property type="match status" value="1"/>
</dbReference>
<dbReference type="SUPFAM" id="SSF88697">
    <property type="entry name" value="PUA domain-like"/>
    <property type="match status" value="1"/>
</dbReference>
<dbReference type="SUPFAM" id="SSF51713">
    <property type="entry name" value="tRNA-guanine transglycosylase"/>
    <property type="match status" value="1"/>
</dbReference>
<dbReference type="PROSITE" id="PS50890">
    <property type="entry name" value="PUA"/>
    <property type="match status" value="1"/>
</dbReference>
<comment type="function">
    <text evidence="1">Exchanges the guanine residue with 7-cyano-7-deazaguanine (preQ0) at position 15 in the dihydrouridine loop (D-loop) of archaeal tRNAs.</text>
</comment>
<comment type="catalytic activity">
    <reaction evidence="1">
        <text>guanosine(15) in tRNA + 7-cyano-7-deazaguanine = 7-cyano-7-carbaguanosine(15) in tRNA + guanine</text>
        <dbReference type="Rhea" id="RHEA:43164"/>
        <dbReference type="Rhea" id="RHEA-COMP:10371"/>
        <dbReference type="Rhea" id="RHEA-COMP:10372"/>
        <dbReference type="ChEBI" id="CHEBI:16235"/>
        <dbReference type="ChEBI" id="CHEBI:45075"/>
        <dbReference type="ChEBI" id="CHEBI:74269"/>
        <dbReference type="ChEBI" id="CHEBI:82850"/>
        <dbReference type="EC" id="2.4.2.48"/>
    </reaction>
</comment>
<comment type="cofactor">
    <cofactor evidence="1">
        <name>Zn(2+)</name>
        <dbReference type="ChEBI" id="CHEBI:29105"/>
    </cofactor>
    <text evidence="1">Binds 1 zinc ion per subunit.</text>
</comment>
<comment type="pathway">
    <text evidence="1">tRNA modification; archaeosine-tRNA biosynthesis.</text>
</comment>
<comment type="similarity">
    <text evidence="1">Belongs to the archaeosine tRNA-ribosyltransferase family.</text>
</comment>
<reference key="1">
    <citation type="journal article" date="2008" name="Proc. Natl. Acad. Sci. U.S.A.">
        <title>A korarchaeal genome reveals new insights into the evolution of the Archaea.</title>
        <authorList>
            <person name="Elkins J.G."/>
            <person name="Podar M."/>
            <person name="Graham D.E."/>
            <person name="Makarova K.S."/>
            <person name="Wolf Y."/>
            <person name="Randau L."/>
            <person name="Hedlund B.P."/>
            <person name="Brochier-Armanet C."/>
            <person name="Kunin V."/>
            <person name="Anderson I."/>
            <person name="Lapidus A."/>
            <person name="Goltsman E."/>
            <person name="Barry K."/>
            <person name="Koonin E.V."/>
            <person name="Hugenholtz P."/>
            <person name="Kyrpides N."/>
            <person name="Wanner G."/>
            <person name="Richardson P."/>
            <person name="Keller M."/>
            <person name="Stetter K.O."/>
        </authorList>
    </citation>
    <scope>NUCLEOTIDE SEQUENCE [LARGE SCALE GENOMIC DNA]</scope>
    <source>
        <strain>OPF8</strain>
    </source>
</reference>
<sequence length="590" mass="67149">MGLYFRVRKSDASARLSELKTKSGTLILPEFFPVYNPNKPVITPREMSEMGIKAIITNSYLIYRSPELREAAIERGIHSLLGFDGVVMTDSGAYQIYRYGRVDVTNSEILRFQHSIGSDIGSILDVPMSSEIGREEAESGVERTIRNAEEWASMREELSNTLWVGTPQGSIYRDLVIKCSERIRELDFDYNGVGSIKVALEKYDFVTQVDHFMSIRSILRAGKPFHFWGIGHPSTFAFFAAIGADSFDSASYSLYAEQGRYMTPHGTLLLDEIEEFPCSCPVCSSHDPKEVKAMSKEERTKLLAKHNLYISISEIKKVREAIRGEWLWELVQERSRFHPNLYFALMHLLRRYSSLLEAREPLFKSSGLQCSGPESFLRPEVVRARNRLKYIHYNGKFRRVLYGDVPLGLKYLYPFGQTICPYDEEVQDEPEDDEIITCVLSYQYEFPFPKLPAIMRRSKSTGTLREVSLEGKVIGHFRPNDGAFIPTLDGASLILSHLPYPKGRVVVKGLFSDTVARGTTVFVKFVKEADPSIRPKSEVIVVNESDELLATGKAVLSGVEYHQYHPDHPFIIIRRHVKPRSEEKPPEVDS</sequence>
<feature type="chain" id="PRO_1000215800" description="tRNA-guanine(15) transglycosylase">
    <location>
        <begin position="1"/>
        <end position="590"/>
    </location>
</feature>
<feature type="domain" description="PUA" evidence="1">
    <location>
        <begin position="502"/>
        <end position="577"/>
    </location>
</feature>
<feature type="active site" description="Nucleophile" evidence="1">
    <location>
        <position position="90"/>
    </location>
</feature>
<feature type="binding site" evidence="1">
    <location>
        <position position="125"/>
    </location>
    <ligand>
        <name>substrate</name>
    </ligand>
</feature>
<feature type="binding site" evidence="1">
    <location>
        <position position="278"/>
    </location>
    <ligand>
        <name>Zn(2+)</name>
        <dbReference type="ChEBI" id="CHEBI:29105"/>
    </ligand>
</feature>
<feature type="binding site" evidence="1">
    <location>
        <position position="280"/>
    </location>
    <ligand>
        <name>Zn(2+)</name>
        <dbReference type="ChEBI" id="CHEBI:29105"/>
    </ligand>
</feature>
<feature type="binding site" evidence="1">
    <location>
        <position position="283"/>
    </location>
    <ligand>
        <name>Zn(2+)</name>
        <dbReference type="ChEBI" id="CHEBI:29105"/>
    </ligand>
</feature>
<keyword id="KW-0328">Glycosyltransferase</keyword>
<keyword id="KW-0479">Metal-binding</keyword>
<keyword id="KW-1185">Reference proteome</keyword>
<keyword id="KW-0808">Transferase</keyword>
<keyword id="KW-0819">tRNA processing</keyword>
<keyword id="KW-0862">Zinc</keyword>
<protein>
    <recommendedName>
        <fullName evidence="1">tRNA-guanine(15) transglycosylase</fullName>
        <ecNumber evidence="1">2.4.2.48</ecNumber>
    </recommendedName>
    <alternativeName>
        <fullName evidence="1">7-cyano-7-deazaguanine tRNA-ribosyltransferase</fullName>
    </alternativeName>
    <alternativeName>
        <fullName evidence="1">Archaeal tRNA-guanine transglycosylase</fullName>
    </alternativeName>
</protein>
<proteinExistence type="inferred from homology"/>